<evidence type="ECO:0000255" key="1">
    <source>
        <dbReference type="HAMAP-Rule" id="MF_01320"/>
    </source>
</evidence>
<evidence type="ECO:0000256" key="2">
    <source>
        <dbReference type="SAM" id="MobiDB-lite"/>
    </source>
</evidence>
<evidence type="ECO:0000305" key="3"/>
<organism>
    <name type="scientific">Teredinibacter turnerae (strain ATCC 39867 / T7901)</name>
    <dbReference type="NCBI Taxonomy" id="377629"/>
    <lineage>
        <taxon>Bacteria</taxon>
        <taxon>Pseudomonadati</taxon>
        <taxon>Pseudomonadota</taxon>
        <taxon>Gammaproteobacteria</taxon>
        <taxon>Cellvibrionales</taxon>
        <taxon>Cellvibrionaceae</taxon>
        <taxon>Teredinibacter</taxon>
    </lineage>
</organism>
<name>RL2_TERTT</name>
<dbReference type="EMBL" id="CP001614">
    <property type="protein sequence ID" value="ACR12745.1"/>
    <property type="molecule type" value="Genomic_DNA"/>
</dbReference>
<dbReference type="RefSeq" id="WP_015818857.1">
    <property type="nucleotide sequence ID" value="NC_012997.1"/>
</dbReference>
<dbReference type="SMR" id="C5BQ64"/>
<dbReference type="STRING" id="377629.TERTU_0911"/>
<dbReference type="KEGG" id="ttu:TERTU_0911"/>
<dbReference type="eggNOG" id="COG0090">
    <property type="taxonomic scope" value="Bacteria"/>
</dbReference>
<dbReference type="HOGENOM" id="CLU_036235_2_1_6"/>
<dbReference type="OrthoDB" id="9778722at2"/>
<dbReference type="Proteomes" id="UP000009080">
    <property type="component" value="Chromosome"/>
</dbReference>
<dbReference type="GO" id="GO:0015934">
    <property type="term" value="C:large ribosomal subunit"/>
    <property type="evidence" value="ECO:0007669"/>
    <property type="project" value="InterPro"/>
</dbReference>
<dbReference type="GO" id="GO:0019843">
    <property type="term" value="F:rRNA binding"/>
    <property type="evidence" value="ECO:0007669"/>
    <property type="project" value="UniProtKB-UniRule"/>
</dbReference>
<dbReference type="GO" id="GO:0003735">
    <property type="term" value="F:structural constituent of ribosome"/>
    <property type="evidence" value="ECO:0007669"/>
    <property type="project" value="InterPro"/>
</dbReference>
<dbReference type="GO" id="GO:0016740">
    <property type="term" value="F:transferase activity"/>
    <property type="evidence" value="ECO:0007669"/>
    <property type="project" value="InterPro"/>
</dbReference>
<dbReference type="GO" id="GO:0002181">
    <property type="term" value="P:cytoplasmic translation"/>
    <property type="evidence" value="ECO:0007669"/>
    <property type="project" value="TreeGrafter"/>
</dbReference>
<dbReference type="FunFam" id="2.30.30.30:FF:000001">
    <property type="entry name" value="50S ribosomal protein L2"/>
    <property type="match status" value="1"/>
</dbReference>
<dbReference type="FunFam" id="2.40.50.140:FF:000003">
    <property type="entry name" value="50S ribosomal protein L2"/>
    <property type="match status" value="1"/>
</dbReference>
<dbReference type="FunFam" id="4.10.950.10:FF:000001">
    <property type="entry name" value="50S ribosomal protein L2"/>
    <property type="match status" value="1"/>
</dbReference>
<dbReference type="Gene3D" id="2.30.30.30">
    <property type="match status" value="1"/>
</dbReference>
<dbReference type="Gene3D" id="2.40.50.140">
    <property type="entry name" value="Nucleic acid-binding proteins"/>
    <property type="match status" value="1"/>
</dbReference>
<dbReference type="Gene3D" id="4.10.950.10">
    <property type="entry name" value="Ribosomal protein L2, domain 3"/>
    <property type="match status" value="1"/>
</dbReference>
<dbReference type="HAMAP" id="MF_01320_B">
    <property type="entry name" value="Ribosomal_uL2_B"/>
    <property type="match status" value="1"/>
</dbReference>
<dbReference type="InterPro" id="IPR012340">
    <property type="entry name" value="NA-bd_OB-fold"/>
</dbReference>
<dbReference type="InterPro" id="IPR014722">
    <property type="entry name" value="Rib_uL2_dom2"/>
</dbReference>
<dbReference type="InterPro" id="IPR002171">
    <property type="entry name" value="Ribosomal_uL2"/>
</dbReference>
<dbReference type="InterPro" id="IPR005880">
    <property type="entry name" value="Ribosomal_uL2_bac/org-type"/>
</dbReference>
<dbReference type="InterPro" id="IPR022669">
    <property type="entry name" value="Ribosomal_uL2_C"/>
</dbReference>
<dbReference type="InterPro" id="IPR022671">
    <property type="entry name" value="Ribosomal_uL2_CS"/>
</dbReference>
<dbReference type="InterPro" id="IPR014726">
    <property type="entry name" value="Ribosomal_uL2_dom3"/>
</dbReference>
<dbReference type="InterPro" id="IPR022666">
    <property type="entry name" value="Ribosomal_uL2_RNA-bd_dom"/>
</dbReference>
<dbReference type="InterPro" id="IPR008991">
    <property type="entry name" value="Translation_prot_SH3-like_sf"/>
</dbReference>
<dbReference type="NCBIfam" id="TIGR01171">
    <property type="entry name" value="rplB_bact"/>
    <property type="match status" value="1"/>
</dbReference>
<dbReference type="PANTHER" id="PTHR13691:SF5">
    <property type="entry name" value="LARGE RIBOSOMAL SUBUNIT PROTEIN UL2M"/>
    <property type="match status" value="1"/>
</dbReference>
<dbReference type="PANTHER" id="PTHR13691">
    <property type="entry name" value="RIBOSOMAL PROTEIN L2"/>
    <property type="match status" value="1"/>
</dbReference>
<dbReference type="Pfam" id="PF00181">
    <property type="entry name" value="Ribosomal_L2"/>
    <property type="match status" value="1"/>
</dbReference>
<dbReference type="Pfam" id="PF03947">
    <property type="entry name" value="Ribosomal_L2_C"/>
    <property type="match status" value="1"/>
</dbReference>
<dbReference type="PIRSF" id="PIRSF002158">
    <property type="entry name" value="Ribosomal_L2"/>
    <property type="match status" value="1"/>
</dbReference>
<dbReference type="SMART" id="SM01383">
    <property type="entry name" value="Ribosomal_L2"/>
    <property type="match status" value="1"/>
</dbReference>
<dbReference type="SMART" id="SM01382">
    <property type="entry name" value="Ribosomal_L2_C"/>
    <property type="match status" value="1"/>
</dbReference>
<dbReference type="SUPFAM" id="SSF50249">
    <property type="entry name" value="Nucleic acid-binding proteins"/>
    <property type="match status" value="1"/>
</dbReference>
<dbReference type="SUPFAM" id="SSF50104">
    <property type="entry name" value="Translation proteins SH3-like domain"/>
    <property type="match status" value="1"/>
</dbReference>
<dbReference type="PROSITE" id="PS00467">
    <property type="entry name" value="RIBOSOMAL_L2"/>
    <property type="match status" value="1"/>
</dbReference>
<feature type="chain" id="PRO_1000214466" description="Large ribosomal subunit protein uL2">
    <location>
        <begin position="1"/>
        <end position="275"/>
    </location>
</feature>
<feature type="region of interest" description="Disordered" evidence="2">
    <location>
        <begin position="34"/>
        <end position="59"/>
    </location>
</feature>
<feature type="region of interest" description="Disordered" evidence="2">
    <location>
        <begin position="223"/>
        <end position="275"/>
    </location>
</feature>
<keyword id="KW-1185">Reference proteome</keyword>
<keyword id="KW-0687">Ribonucleoprotein</keyword>
<keyword id="KW-0689">Ribosomal protein</keyword>
<keyword id="KW-0694">RNA-binding</keyword>
<keyword id="KW-0699">rRNA-binding</keyword>
<reference key="1">
    <citation type="journal article" date="2009" name="PLoS ONE">
        <title>The complete genome of Teredinibacter turnerae T7901: an intracellular endosymbiont of marine wood-boring bivalves (shipworms).</title>
        <authorList>
            <person name="Yang J.C."/>
            <person name="Madupu R."/>
            <person name="Durkin A.S."/>
            <person name="Ekborg N.A."/>
            <person name="Pedamallu C.S."/>
            <person name="Hostetler J.B."/>
            <person name="Radune D."/>
            <person name="Toms B.S."/>
            <person name="Henrissat B."/>
            <person name="Coutinho P.M."/>
            <person name="Schwarz S."/>
            <person name="Field L."/>
            <person name="Trindade-Silva A.E."/>
            <person name="Soares C.A.G."/>
            <person name="Elshahawi S."/>
            <person name="Hanora A."/>
            <person name="Schmidt E.W."/>
            <person name="Haygood M.G."/>
            <person name="Posfai J."/>
            <person name="Benner J."/>
            <person name="Madinger C."/>
            <person name="Nove J."/>
            <person name="Anton B."/>
            <person name="Chaudhary K."/>
            <person name="Foster J."/>
            <person name="Holman A."/>
            <person name="Kumar S."/>
            <person name="Lessard P.A."/>
            <person name="Luyten Y.A."/>
            <person name="Slatko B."/>
            <person name="Wood N."/>
            <person name="Wu B."/>
            <person name="Teplitski M."/>
            <person name="Mougous J.D."/>
            <person name="Ward N."/>
            <person name="Eisen J.A."/>
            <person name="Badger J.H."/>
            <person name="Distel D.L."/>
        </authorList>
    </citation>
    <scope>NUCLEOTIDE SEQUENCE [LARGE SCALE GENOMIC DNA]</scope>
    <source>
        <strain>ATCC 39867 / T7901</strain>
    </source>
</reference>
<gene>
    <name evidence="1" type="primary">rplB</name>
    <name type="ordered locus">TERTU_0911</name>
</gene>
<sequence>MPIQKRKPTSAGRRFVVSVVNPDLHKGAPYAPLLEKKSKSGGRNNNGRITTRHIGGGHKQHYRKIDFKRNKDGIPAKVERLEYDPNRTAHIALVCYADGERRYIIAPKGLKAGDFIESGDASAIKVGNTLPLRNVPVGSVIHCIELKPGKGAQLARSAGASVQLVAREGQYATLRLRSGEMRKVEVECRATLGEVSNSEHSLRSLGKAGAKRWRGVRPTVRGVAMNPVDHPHGGGEGRTSGGRHPVSPWGTPTKGYKTRSNKRTDKMIVRRRNKK</sequence>
<proteinExistence type="inferred from homology"/>
<accession>C5BQ64</accession>
<protein>
    <recommendedName>
        <fullName evidence="1">Large ribosomal subunit protein uL2</fullName>
    </recommendedName>
    <alternativeName>
        <fullName evidence="3">50S ribosomal protein L2</fullName>
    </alternativeName>
</protein>
<comment type="function">
    <text evidence="1">One of the primary rRNA binding proteins. Required for association of the 30S and 50S subunits to form the 70S ribosome, for tRNA binding and peptide bond formation. It has been suggested to have peptidyltransferase activity; this is somewhat controversial. Makes several contacts with the 16S rRNA in the 70S ribosome.</text>
</comment>
<comment type="subunit">
    <text evidence="1">Part of the 50S ribosomal subunit. Forms a bridge to the 30S subunit in the 70S ribosome.</text>
</comment>
<comment type="similarity">
    <text evidence="1">Belongs to the universal ribosomal protein uL2 family.</text>
</comment>